<dbReference type="EC" id="4.2.1.49" evidence="1"/>
<dbReference type="EMBL" id="CP000046">
    <property type="protein sequence ID" value="AAW37153.1"/>
    <property type="molecule type" value="Genomic_DNA"/>
</dbReference>
<dbReference type="RefSeq" id="WP_001226823.1">
    <property type="nucleotide sequence ID" value="NZ_JBGOFO010000004.1"/>
</dbReference>
<dbReference type="SMR" id="Q5HDM6"/>
<dbReference type="KEGG" id="sac:SACOL2324"/>
<dbReference type="HOGENOM" id="CLU_018868_0_1_9"/>
<dbReference type="UniPathway" id="UPA00379">
    <property type="reaction ID" value="UER00550"/>
</dbReference>
<dbReference type="Proteomes" id="UP000000530">
    <property type="component" value="Chromosome"/>
</dbReference>
<dbReference type="GO" id="GO:0005737">
    <property type="term" value="C:cytoplasm"/>
    <property type="evidence" value="ECO:0007669"/>
    <property type="project" value="UniProtKB-SubCell"/>
</dbReference>
<dbReference type="GO" id="GO:0016153">
    <property type="term" value="F:urocanate hydratase activity"/>
    <property type="evidence" value="ECO:0007669"/>
    <property type="project" value="UniProtKB-UniRule"/>
</dbReference>
<dbReference type="GO" id="GO:0019556">
    <property type="term" value="P:L-histidine catabolic process to glutamate and formamide"/>
    <property type="evidence" value="ECO:0007669"/>
    <property type="project" value="UniProtKB-UniPathway"/>
</dbReference>
<dbReference type="GO" id="GO:0019557">
    <property type="term" value="P:L-histidine catabolic process to glutamate and formate"/>
    <property type="evidence" value="ECO:0007669"/>
    <property type="project" value="UniProtKB-UniPathway"/>
</dbReference>
<dbReference type="FunFam" id="3.40.50.10730:FF:000001">
    <property type="entry name" value="Urocanate hydratase"/>
    <property type="match status" value="1"/>
</dbReference>
<dbReference type="Gene3D" id="3.40.50.10730">
    <property type="entry name" value="Urocanase like domains"/>
    <property type="match status" value="1"/>
</dbReference>
<dbReference type="Gene3D" id="3.40.1770.10">
    <property type="entry name" value="Urocanase superfamily"/>
    <property type="match status" value="1"/>
</dbReference>
<dbReference type="HAMAP" id="MF_00577">
    <property type="entry name" value="HutU"/>
    <property type="match status" value="1"/>
</dbReference>
<dbReference type="InterPro" id="IPR055351">
    <property type="entry name" value="Urocanase"/>
</dbReference>
<dbReference type="InterPro" id="IPR023637">
    <property type="entry name" value="Urocanase-like"/>
</dbReference>
<dbReference type="InterPro" id="IPR035401">
    <property type="entry name" value="Urocanase_C"/>
</dbReference>
<dbReference type="InterPro" id="IPR038364">
    <property type="entry name" value="Urocanase_central_sf"/>
</dbReference>
<dbReference type="InterPro" id="IPR023636">
    <property type="entry name" value="Urocanase_CS"/>
</dbReference>
<dbReference type="InterPro" id="IPR035400">
    <property type="entry name" value="Urocanase_N"/>
</dbReference>
<dbReference type="InterPro" id="IPR035085">
    <property type="entry name" value="Urocanase_Rossmann-like"/>
</dbReference>
<dbReference type="InterPro" id="IPR036190">
    <property type="entry name" value="Urocanase_sf"/>
</dbReference>
<dbReference type="NCBIfam" id="TIGR01228">
    <property type="entry name" value="hutU"/>
    <property type="match status" value="1"/>
</dbReference>
<dbReference type="NCBIfam" id="NF003820">
    <property type="entry name" value="PRK05414.1"/>
    <property type="match status" value="1"/>
</dbReference>
<dbReference type="PANTHER" id="PTHR12216">
    <property type="entry name" value="UROCANATE HYDRATASE"/>
    <property type="match status" value="1"/>
</dbReference>
<dbReference type="PANTHER" id="PTHR12216:SF4">
    <property type="entry name" value="UROCANATE HYDRATASE"/>
    <property type="match status" value="1"/>
</dbReference>
<dbReference type="Pfam" id="PF01175">
    <property type="entry name" value="Urocanase"/>
    <property type="match status" value="1"/>
</dbReference>
<dbReference type="Pfam" id="PF17392">
    <property type="entry name" value="Urocanase_C"/>
    <property type="match status" value="1"/>
</dbReference>
<dbReference type="Pfam" id="PF17391">
    <property type="entry name" value="Urocanase_N"/>
    <property type="match status" value="1"/>
</dbReference>
<dbReference type="PIRSF" id="PIRSF001423">
    <property type="entry name" value="Urocanate_hydrat"/>
    <property type="match status" value="1"/>
</dbReference>
<dbReference type="SUPFAM" id="SSF111326">
    <property type="entry name" value="Urocanase"/>
    <property type="match status" value="1"/>
</dbReference>
<dbReference type="PROSITE" id="PS01233">
    <property type="entry name" value="UROCANASE"/>
    <property type="match status" value="1"/>
</dbReference>
<evidence type="ECO:0000255" key="1">
    <source>
        <dbReference type="HAMAP-Rule" id="MF_00577"/>
    </source>
</evidence>
<proteinExistence type="inferred from homology"/>
<keyword id="KW-0963">Cytoplasm</keyword>
<keyword id="KW-0369">Histidine metabolism</keyword>
<keyword id="KW-0456">Lyase</keyword>
<keyword id="KW-0520">NAD</keyword>
<feature type="chain" id="PRO_0000207353" description="Urocanate hydratase">
    <location>
        <begin position="1"/>
        <end position="553"/>
    </location>
</feature>
<feature type="binding site" evidence="1">
    <location>
        <begin position="45"/>
        <end position="46"/>
    </location>
    <ligand>
        <name>NAD(+)</name>
        <dbReference type="ChEBI" id="CHEBI:57540"/>
    </ligand>
</feature>
<feature type="binding site" evidence="1">
    <location>
        <position position="123"/>
    </location>
    <ligand>
        <name>NAD(+)</name>
        <dbReference type="ChEBI" id="CHEBI:57540"/>
    </ligand>
</feature>
<feature type="binding site" evidence="1">
    <location>
        <begin position="169"/>
        <end position="171"/>
    </location>
    <ligand>
        <name>NAD(+)</name>
        <dbReference type="ChEBI" id="CHEBI:57540"/>
    </ligand>
</feature>
<feature type="binding site" evidence="1">
    <location>
        <position position="189"/>
    </location>
    <ligand>
        <name>NAD(+)</name>
        <dbReference type="ChEBI" id="CHEBI:57540"/>
    </ligand>
</feature>
<feature type="binding site" evidence="1">
    <location>
        <position position="194"/>
    </location>
    <ligand>
        <name>NAD(+)</name>
        <dbReference type="ChEBI" id="CHEBI:57540"/>
    </ligand>
</feature>
<feature type="binding site" evidence="1">
    <location>
        <begin position="235"/>
        <end position="236"/>
    </location>
    <ligand>
        <name>NAD(+)</name>
        <dbReference type="ChEBI" id="CHEBI:57540"/>
    </ligand>
</feature>
<feature type="binding site" evidence="1">
    <location>
        <begin position="256"/>
        <end position="260"/>
    </location>
    <ligand>
        <name>NAD(+)</name>
        <dbReference type="ChEBI" id="CHEBI:57540"/>
    </ligand>
</feature>
<feature type="binding site" evidence="1">
    <location>
        <begin position="266"/>
        <end position="267"/>
    </location>
    <ligand>
        <name>NAD(+)</name>
        <dbReference type="ChEBI" id="CHEBI:57540"/>
    </ligand>
</feature>
<feature type="binding site" evidence="1">
    <location>
        <position position="315"/>
    </location>
    <ligand>
        <name>NAD(+)</name>
        <dbReference type="ChEBI" id="CHEBI:57540"/>
    </ligand>
</feature>
<feature type="binding site" evidence="1">
    <location>
        <position position="485"/>
    </location>
    <ligand>
        <name>NAD(+)</name>
        <dbReference type="ChEBI" id="CHEBI:57540"/>
    </ligand>
</feature>
<comment type="function">
    <text evidence="1">Catalyzes the conversion of urocanate to 4-imidazolone-5-propionate.</text>
</comment>
<comment type="catalytic activity">
    <reaction evidence="1">
        <text>4-imidazolone-5-propanoate = trans-urocanate + H2O</text>
        <dbReference type="Rhea" id="RHEA:13101"/>
        <dbReference type="ChEBI" id="CHEBI:15377"/>
        <dbReference type="ChEBI" id="CHEBI:17771"/>
        <dbReference type="ChEBI" id="CHEBI:77893"/>
        <dbReference type="EC" id="4.2.1.49"/>
    </reaction>
</comment>
<comment type="cofactor">
    <cofactor evidence="1">
        <name>NAD(+)</name>
        <dbReference type="ChEBI" id="CHEBI:57540"/>
    </cofactor>
    <text evidence="1">Binds 1 NAD(+) per subunit.</text>
</comment>
<comment type="pathway">
    <text evidence="1">Amino-acid degradation; L-histidine degradation into L-glutamate; N-formimidoyl-L-glutamate from L-histidine: step 2/3.</text>
</comment>
<comment type="subcellular location">
    <subcellularLocation>
        <location evidence="1">Cytoplasm</location>
    </subcellularLocation>
</comment>
<comment type="similarity">
    <text evidence="1">Belongs to the urocanase family.</text>
</comment>
<name>HUTU_STAAC</name>
<organism>
    <name type="scientific">Staphylococcus aureus (strain COL)</name>
    <dbReference type="NCBI Taxonomy" id="93062"/>
    <lineage>
        <taxon>Bacteria</taxon>
        <taxon>Bacillati</taxon>
        <taxon>Bacillota</taxon>
        <taxon>Bacilli</taxon>
        <taxon>Bacillales</taxon>
        <taxon>Staphylococcaceae</taxon>
        <taxon>Staphylococcus</taxon>
    </lineage>
</organism>
<accession>Q5HDM6</accession>
<reference key="1">
    <citation type="journal article" date="2005" name="J. Bacteriol.">
        <title>Insights on evolution of virulence and resistance from the complete genome analysis of an early methicillin-resistant Staphylococcus aureus strain and a biofilm-producing methicillin-resistant Staphylococcus epidermidis strain.</title>
        <authorList>
            <person name="Gill S.R."/>
            <person name="Fouts D.E."/>
            <person name="Archer G.L."/>
            <person name="Mongodin E.F."/>
            <person name="DeBoy R.T."/>
            <person name="Ravel J."/>
            <person name="Paulsen I.T."/>
            <person name="Kolonay J.F."/>
            <person name="Brinkac L.M."/>
            <person name="Beanan M.J."/>
            <person name="Dodson R.J."/>
            <person name="Daugherty S.C."/>
            <person name="Madupu R."/>
            <person name="Angiuoli S.V."/>
            <person name="Durkin A.S."/>
            <person name="Haft D.H."/>
            <person name="Vamathevan J.J."/>
            <person name="Khouri H."/>
            <person name="Utterback T.R."/>
            <person name="Lee C."/>
            <person name="Dimitrov G."/>
            <person name="Jiang L."/>
            <person name="Qin H."/>
            <person name="Weidman J."/>
            <person name="Tran K."/>
            <person name="Kang K.H."/>
            <person name="Hance I.R."/>
            <person name="Nelson K.E."/>
            <person name="Fraser C.M."/>
        </authorList>
    </citation>
    <scope>NUCLEOTIDE SEQUENCE [LARGE SCALE GENOMIC DNA]</scope>
    <source>
        <strain>COL</strain>
    </source>
</reference>
<protein>
    <recommendedName>
        <fullName evidence="1">Urocanate hydratase</fullName>
        <shortName evidence="1">Urocanase</shortName>
        <ecNumber evidence="1">4.2.1.49</ecNumber>
    </recommendedName>
    <alternativeName>
        <fullName evidence="1">Imidazolonepropionate hydrolase</fullName>
    </alternativeName>
</protein>
<gene>
    <name evidence="1" type="primary">hutU</name>
    <name type="ordered locus">SACOL2324</name>
</gene>
<sequence length="553" mass="60633">MRKIQAKKGLSIECKGWEQEAVLRMLYNNLDPEVAERPEDLVVYGGIGKAARNWEAFEAIEKTLRELESDETMLVQSGKPVAVFKTHEEAPRVLISNSVLVPEWANWDHFNELDKKGLIMYGQMTAGSWIYIGSQGIVQGTYETFAELGNQHFNGDLAGTVTLTAGLGGMGGAQPLAITMNHGVAICVDVDETRVDKRIDTKYCDVKTADLDEALKLAEEAKERGEGLSIGLVGNAVDIHQAILEKGFKIDIITDQTSAHDPLNGYVPQGYSVEEAKVLREKDPKKYVELSQASMAKHVELMLEFQKRGAVAFDYGNNIRQVAFNNGVKNAFDFPGFVPAYIRPLFCEGKGPFRFAALSGDPKDIERADEEMRKLFPENEKLLRWLDLAEEKISYQGLPSRIAWLGYGERAKMGLALNRLVRDGEISAPIVIGRDHLDAGSVASPNRETESMKDGSDAVGDWAVLNALINTAAGGSWISFHHGGGVGMGYSLHAGMVVVADGSERAERRLERVLTTDPGMGVARHVDAGYDIAIQTAKEKGIHIPMIDKAGDK</sequence>